<proteinExistence type="evidence at protein level"/>
<feature type="chain" id="PRO_0000139312" description="Putative nickel-responsive regulator">
    <location>
        <begin position="1"/>
        <end position="138"/>
    </location>
</feature>
<feature type="binding site" evidence="1">
    <location>
        <position position="78"/>
    </location>
    <ligand>
        <name>Ni(2+)</name>
        <dbReference type="ChEBI" id="CHEBI:49786"/>
    </ligand>
</feature>
<feature type="binding site" evidence="1">
    <location>
        <position position="89"/>
    </location>
    <ligand>
        <name>Ni(2+)</name>
        <dbReference type="ChEBI" id="CHEBI:49786"/>
    </ligand>
</feature>
<feature type="binding site" evidence="1">
    <location>
        <position position="91"/>
    </location>
    <ligand>
        <name>Ni(2+)</name>
        <dbReference type="ChEBI" id="CHEBI:49786"/>
    </ligand>
</feature>
<feature type="binding site" evidence="1">
    <location>
        <position position="97"/>
    </location>
    <ligand>
        <name>Ni(2+)</name>
        <dbReference type="ChEBI" id="CHEBI:49786"/>
    </ligand>
</feature>
<feature type="strand" evidence="3">
    <location>
        <begin position="3"/>
        <end position="11"/>
    </location>
</feature>
<feature type="helix" evidence="3">
    <location>
        <begin position="12"/>
        <end position="25"/>
    </location>
</feature>
<feature type="helix" evidence="3">
    <location>
        <begin position="30"/>
        <end position="44"/>
    </location>
</feature>
<feature type="helix" evidence="2">
    <location>
        <begin position="46"/>
        <end position="48"/>
    </location>
</feature>
<feature type="strand" evidence="3">
    <location>
        <begin position="51"/>
        <end position="63"/>
    </location>
</feature>
<feature type="helix" evidence="3">
    <location>
        <begin position="69"/>
        <end position="79"/>
    </location>
</feature>
<feature type="turn" evidence="3">
    <location>
        <begin position="80"/>
        <end position="83"/>
    </location>
</feature>
<feature type="strand" evidence="3">
    <location>
        <begin position="84"/>
        <end position="91"/>
    </location>
</feature>
<feature type="strand" evidence="3">
    <location>
        <begin position="93"/>
        <end position="106"/>
    </location>
</feature>
<feature type="helix" evidence="3">
    <location>
        <begin position="107"/>
        <end position="118"/>
    </location>
</feature>
<feature type="strand" evidence="3">
    <location>
        <begin position="123"/>
        <end position="131"/>
    </location>
</feature>
<evidence type="ECO:0000255" key="1">
    <source>
        <dbReference type="HAMAP-Rule" id="MF_00476"/>
    </source>
</evidence>
<evidence type="ECO:0007829" key="2">
    <source>
        <dbReference type="PDB" id="2BJ3"/>
    </source>
</evidence>
<evidence type="ECO:0007829" key="3">
    <source>
        <dbReference type="PDB" id="2BJ7"/>
    </source>
</evidence>
<accession>O58316</accession>
<comment type="function">
    <text evidence="1">Transcriptional regulator.</text>
</comment>
<comment type="cofactor">
    <cofactor evidence="1">
        <name>Ni(2+)</name>
        <dbReference type="ChEBI" id="CHEBI:49786"/>
    </cofactor>
    <text evidence="1">Binds 1 nickel ion per subunit.</text>
</comment>
<comment type="similarity">
    <text evidence="1">Belongs to the transcriptional regulatory CopG/NikR family.</text>
</comment>
<protein>
    <recommendedName>
        <fullName evidence="1">Putative nickel-responsive regulator</fullName>
    </recommendedName>
</protein>
<reference key="1">
    <citation type="journal article" date="1998" name="DNA Res.">
        <title>Complete sequence and gene organization of the genome of a hyper-thermophilic archaebacterium, Pyrococcus horikoshii OT3.</title>
        <authorList>
            <person name="Kawarabayasi Y."/>
            <person name="Sawada M."/>
            <person name="Horikawa H."/>
            <person name="Haikawa Y."/>
            <person name="Hino Y."/>
            <person name="Yamamoto S."/>
            <person name="Sekine M."/>
            <person name="Baba S."/>
            <person name="Kosugi H."/>
            <person name="Hosoyama A."/>
            <person name="Nagai Y."/>
            <person name="Sakai M."/>
            <person name="Ogura K."/>
            <person name="Otsuka R."/>
            <person name="Nakazawa H."/>
            <person name="Takamiya M."/>
            <person name="Ohfuku Y."/>
            <person name="Funahashi T."/>
            <person name="Tanaka T."/>
            <person name="Kudoh Y."/>
            <person name="Yamazaki J."/>
            <person name="Kushida N."/>
            <person name="Oguchi A."/>
            <person name="Aoki K."/>
            <person name="Yoshizawa T."/>
            <person name="Nakamura Y."/>
            <person name="Robb F.T."/>
            <person name="Horikoshi K."/>
            <person name="Masuchi Y."/>
            <person name="Shizuya H."/>
            <person name="Kikuchi H."/>
        </authorList>
    </citation>
    <scope>NUCLEOTIDE SEQUENCE [LARGE SCALE GENOMIC DNA]</scope>
    <source>
        <strain>ATCC 700860 / DSM 12428 / JCM 9974 / NBRC 100139 / OT-3</strain>
    </source>
</reference>
<gene>
    <name type="ordered locus">PH0601</name>
</gene>
<dbReference type="EMBL" id="BA000001">
    <property type="protein sequence ID" value="BAA29690.1"/>
    <property type="molecule type" value="Genomic_DNA"/>
</dbReference>
<dbReference type="PIR" id="E71175">
    <property type="entry name" value="E71175"/>
</dbReference>
<dbReference type="RefSeq" id="WP_010884702.1">
    <property type="nucleotide sequence ID" value="NC_000961.1"/>
</dbReference>
<dbReference type="PDB" id="2BJ1">
    <property type="method" value="X-ray"/>
    <property type="resolution" value="3.00 A"/>
    <property type="chains" value="A/B=1-138"/>
</dbReference>
<dbReference type="PDB" id="2BJ3">
    <property type="method" value="X-ray"/>
    <property type="resolution" value="2.20 A"/>
    <property type="chains" value="A/B/C/D=1-138"/>
</dbReference>
<dbReference type="PDB" id="2BJ7">
    <property type="method" value="X-ray"/>
    <property type="resolution" value="2.10 A"/>
    <property type="chains" value="A/B=1-138"/>
</dbReference>
<dbReference type="PDB" id="2BJ8">
    <property type="method" value="X-ray"/>
    <property type="resolution" value="2.10 A"/>
    <property type="chains" value="A/B=1-138"/>
</dbReference>
<dbReference type="PDB" id="2BJ9">
    <property type="method" value="X-ray"/>
    <property type="resolution" value="3.00 A"/>
    <property type="chains" value="A/B=1-138"/>
</dbReference>
<dbReference type="PDBsum" id="2BJ1"/>
<dbReference type="PDBsum" id="2BJ3"/>
<dbReference type="PDBsum" id="2BJ7"/>
<dbReference type="PDBsum" id="2BJ8"/>
<dbReference type="PDBsum" id="2BJ9"/>
<dbReference type="SMR" id="O58316"/>
<dbReference type="STRING" id="70601.gene:9377541"/>
<dbReference type="EnsemblBacteria" id="BAA29690">
    <property type="protein sequence ID" value="BAA29690"/>
    <property type="gene ID" value="BAA29690"/>
</dbReference>
<dbReference type="GeneID" id="1442936"/>
<dbReference type="KEGG" id="pho:PH0601"/>
<dbReference type="eggNOG" id="arCOG01008">
    <property type="taxonomic scope" value="Archaea"/>
</dbReference>
<dbReference type="OrthoDB" id="25654at2157"/>
<dbReference type="EvolutionaryTrace" id="O58316"/>
<dbReference type="Proteomes" id="UP000000752">
    <property type="component" value="Chromosome"/>
</dbReference>
<dbReference type="GO" id="GO:0003677">
    <property type="term" value="F:DNA binding"/>
    <property type="evidence" value="ECO:0007669"/>
    <property type="project" value="UniProtKB-KW"/>
</dbReference>
<dbReference type="GO" id="GO:0003700">
    <property type="term" value="F:DNA-binding transcription factor activity"/>
    <property type="evidence" value="ECO:0007669"/>
    <property type="project" value="UniProtKB-UniRule"/>
</dbReference>
<dbReference type="GO" id="GO:0016151">
    <property type="term" value="F:nickel cation binding"/>
    <property type="evidence" value="ECO:0007669"/>
    <property type="project" value="UniProtKB-UniRule"/>
</dbReference>
<dbReference type="GO" id="GO:0010045">
    <property type="term" value="P:response to nickel cation"/>
    <property type="evidence" value="ECO:0007669"/>
    <property type="project" value="InterPro"/>
</dbReference>
<dbReference type="CDD" id="cd22231">
    <property type="entry name" value="RHH_NikR_HicB-like"/>
    <property type="match status" value="1"/>
</dbReference>
<dbReference type="Gene3D" id="3.30.70.1150">
    <property type="entry name" value="ACT-like. Chain A, domain 2"/>
    <property type="match status" value="1"/>
</dbReference>
<dbReference type="Gene3D" id="1.10.1220.10">
    <property type="entry name" value="Met repressor-like"/>
    <property type="match status" value="1"/>
</dbReference>
<dbReference type="HAMAP" id="MF_00476">
    <property type="entry name" value="NikR"/>
    <property type="match status" value="1"/>
</dbReference>
<dbReference type="InterPro" id="IPR027271">
    <property type="entry name" value="Acetolactate_synth/TF_NikR_C"/>
</dbReference>
<dbReference type="InterPro" id="IPR045865">
    <property type="entry name" value="ACT-like_dom_sf"/>
</dbReference>
<dbReference type="InterPro" id="IPR013321">
    <property type="entry name" value="Arc_rbn_hlx_hlx"/>
</dbReference>
<dbReference type="InterPro" id="IPR002145">
    <property type="entry name" value="CopG"/>
</dbReference>
<dbReference type="InterPro" id="IPR050192">
    <property type="entry name" value="CopG/NikR_regulator"/>
</dbReference>
<dbReference type="InterPro" id="IPR022988">
    <property type="entry name" value="Ni_resp_reg_NikR"/>
</dbReference>
<dbReference type="InterPro" id="IPR010985">
    <property type="entry name" value="Ribbon_hlx_hlx"/>
</dbReference>
<dbReference type="InterPro" id="IPR014864">
    <property type="entry name" value="TF_NikR_Ni-bd_C"/>
</dbReference>
<dbReference type="NCBIfam" id="NF001884">
    <property type="entry name" value="PRK00630.1"/>
    <property type="match status" value="1"/>
</dbReference>
<dbReference type="NCBIfam" id="NF002169">
    <property type="entry name" value="PRK01002.1"/>
    <property type="match status" value="1"/>
</dbReference>
<dbReference type="NCBIfam" id="NF002815">
    <property type="entry name" value="PRK02967.1"/>
    <property type="match status" value="1"/>
</dbReference>
<dbReference type="NCBIfam" id="NF003381">
    <property type="entry name" value="PRK04460.1"/>
    <property type="match status" value="1"/>
</dbReference>
<dbReference type="PANTHER" id="PTHR34719">
    <property type="entry name" value="NICKEL-RESPONSIVE REGULATOR"/>
    <property type="match status" value="1"/>
</dbReference>
<dbReference type="PANTHER" id="PTHR34719:SF2">
    <property type="entry name" value="NICKEL-RESPONSIVE REGULATOR"/>
    <property type="match status" value="1"/>
</dbReference>
<dbReference type="Pfam" id="PF08753">
    <property type="entry name" value="NikR_C"/>
    <property type="match status" value="1"/>
</dbReference>
<dbReference type="Pfam" id="PF01402">
    <property type="entry name" value="RHH_1"/>
    <property type="match status" value="1"/>
</dbReference>
<dbReference type="SUPFAM" id="SSF55021">
    <property type="entry name" value="ACT-like"/>
    <property type="match status" value="1"/>
</dbReference>
<dbReference type="SUPFAM" id="SSF47598">
    <property type="entry name" value="Ribbon-helix-helix"/>
    <property type="match status" value="1"/>
</dbReference>
<name>NIKR_PYRHO</name>
<organism>
    <name type="scientific">Pyrococcus horikoshii (strain ATCC 700860 / DSM 12428 / JCM 9974 / NBRC 100139 / OT-3)</name>
    <dbReference type="NCBI Taxonomy" id="70601"/>
    <lineage>
        <taxon>Archaea</taxon>
        <taxon>Methanobacteriati</taxon>
        <taxon>Methanobacteriota</taxon>
        <taxon>Thermococci</taxon>
        <taxon>Thermococcales</taxon>
        <taxon>Thermococcaceae</taxon>
        <taxon>Pyrococcus</taxon>
    </lineage>
</organism>
<keyword id="KW-0002">3D-structure</keyword>
<keyword id="KW-0238">DNA-binding</keyword>
<keyword id="KW-0479">Metal-binding</keyword>
<keyword id="KW-0533">Nickel</keyword>
<keyword id="KW-0804">Transcription</keyword>
<keyword id="KW-0805">Transcription regulation</keyword>
<sequence length="138" mass="15806">MELIRFSISIPSKLLEKFDQIIEEIGYENRSEAIRDLIRDFIIRHEWEVGNEEVAGTITIVYNHDEGDVVKALLDLQHEYLDEIISSLHVHMDEHNCLEVIVVKGEAKKIKMIADKLLSLKGVKHGKLVMTSTGKELV</sequence>